<proteinExistence type="inferred from homology"/>
<name>RL27_ACTP7</name>
<gene>
    <name evidence="1" type="primary">rpmA</name>
    <name type="ordered locus">APP7_2087</name>
</gene>
<sequence>MATKKAGGSTRNGRDSEAKRLGVKRFGGESVLAGSIIVRQRGTKFHAGNNVGMGKDHTLFATADGKVKFEVKGEKNRKYVSIVAE</sequence>
<accession>B3GZE6</accession>
<reference key="1">
    <citation type="submission" date="2008-06" db="EMBL/GenBank/DDBJ databases">
        <title>Genome and proteome analysis of A. pleuropneumoniae serotype 7.</title>
        <authorList>
            <person name="Linke B."/>
            <person name="Buettner F."/>
            <person name="Martinez-Arias R."/>
            <person name="Goesmann A."/>
            <person name="Baltes N."/>
            <person name="Tegetmeyer H."/>
            <person name="Singh M."/>
            <person name="Gerlach G.F."/>
        </authorList>
    </citation>
    <scope>NUCLEOTIDE SEQUENCE [LARGE SCALE GENOMIC DNA]</scope>
    <source>
        <strain>AP76</strain>
    </source>
</reference>
<dbReference type="EMBL" id="CP001091">
    <property type="protein sequence ID" value="ACE62739.1"/>
    <property type="molecule type" value="Genomic_DNA"/>
</dbReference>
<dbReference type="RefSeq" id="WP_005599816.1">
    <property type="nucleotide sequence ID" value="NC_010939.1"/>
</dbReference>
<dbReference type="SMR" id="B3GZE6"/>
<dbReference type="GeneID" id="48600302"/>
<dbReference type="KEGG" id="apa:APP7_2087"/>
<dbReference type="HOGENOM" id="CLU_095424_4_1_6"/>
<dbReference type="Proteomes" id="UP000001226">
    <property type="component" value="Chromosome"/>
</dbReference>
<dbReference type="GO" id="GO:0022625">
    <property type="term" value="C:cytosolic large ribosomal subunit"/>
    <property type="evidence" value="ECO:0007669"/>
    <property type="project" value="TreeGrafter"/>
</dbReference>
<dbReference type="GO" id="GO:0003735">
    <property type="term" value="F:structural constituent of ribosome"/>
    <property type="evidence" value="ECO:0007669"/>
    <property type="project" value="InterPro"/>
</dbReference>
<dbReference type="GO" id="GO:0006412">
    <property type="term" value="P:translation"/>
    <property type="evidence" value="ECO:0007669"/>
    <property type="project" value="UniProtKB-UniRule"/>
</dbReference>
<dbReference type="FunFam" id="2.40.50.100:FF:000001">
    <property type="entry name" value="50S ribosomal protein L27"/>
    <property type="match status" value="1"/>
</dbReference>
<dbReference type="Gene3D" id="2.40.50.100">
    <property type="match status" value="1"/>
</dbReference>
<dbReference type="HAMAP" id="MF_00539">
    <property type="entry name" value="Ribosomal_bL27"/>
    <property type="match status" value="1"/>
</dbReference>
<dbReference type="InterPro" id="IPR001684">
    <property type="entry name" value="Ribosomal_bL27"/>
</dbReference>
<dbReference type="InterPro" id="IPR018261">
    <property type="entry name" value="Ribosomal_bL27_CS"/>
</dbReference>
<dbReference type="NCBIfam" id="TIGR00062">
    <property type="entry name" value="L27"/>
    <property type="match status" value="1"/>
</dbReference>
<dbReference type="PANTHER" id="PTHR15893:SF0">
    <property type="entry name" value="LARGE RIBOSOMAL SUBUNIT PROTEIN BL27M"/>
    <property type="match status" value="1"/>
</dbReference>
<dbReference type="PANTHER" id="PTHR15893">
    <property type="entry name" value="RIBOSOMAL PROTEIN L27"/>
    <property type="match status" value="1"/>
</dbReference>
<dbReference type="Pfam" id="PF01016">
    <property type="entry name" value="Ribosomal_L27"/>
    <property type="match status" value="1"/>
</dbReference>
<dbReference type="PRINTS" id="PR00063">
    <property type="entry name" value="RIBOSOMALL27"/>
</dbReference>
<dbReference type="SUPFAM" id="SSF110324">
    <property type="entry name" value="Ribosomal L27 protein-like"/>
    <property type="match status" value="1"/>
</dbReference>
<dbReference type="PROSITE" id="PS00831">
    <property type="entry name" value="RIBOSOMAL_L27"/>
    <property type="match status" value="1"/>
</dbReference>
<evidence type="ECO:0000255" key="1">
    <source>
        <dbReference type="HAMAP-Rule" id="MF_00539"/>
    </source>
</evidence>
<evidence type="ECO:0000256" key="2">
    <source>
        <dbReference type="SAM" id="MobiDB-lite"/>
    </source>
</evidence>
<evidence type="ECO:0000305" key="3"/>
<protein>
    <recommendedName>
        <fullName evidence="1">Large ribosomal subunit protein bL27</fullName>
    </recommendedName>
    <alternativeName>
        <fullName evidence="3">50S ribosomal protein L27</fullName>
    </alternativeName>
</protein>
<keyword id="KW-0687">Ribonucleoprotein</keyword>
<keyword id="KW-0689">Ribosomal protein</keyword>
<comment type="similarity">
    <text evidence="1">Belongs to the bacterial ribosomal protein bL27 family.</text>
</comment>
<organism>
    <name type="scientific">Actinobacillus pleuropneumoniae serotype 7 (strain AP76)</name>
    <dbReference type="NCBI Taxonomy" id="537457"/>
    <lineage>
        <taxon>Bacteria</taxon>
        <taxon>Pseudomonadati</taxon>
        <taxon>Pseudomonadota</taxon>
        <taxon>Gammaproteobacteria</taxon>
        <taxon>Pasteurellales</taxon>
        <taxon>Pasteurellaceae</taxon>
        <taxon>Actinobacillus</taxon>
    </lineage>
</organism>
<feature type="chain" id="PRO_1000128682" description="Large ribosomal subunit protein bL27">
    <location>
        <begin position="1"/>
        <end position="85"/>
    </location>
</feature>
<feature type="region of interest" description="Disordered" evidence="2">
    <location>
        <begin position="1"/>
        <end position="20"/>
    </location>
</feature>